<name>LEC_MACAX</name>
<dbReference type="PIR" id="A03367">
    <property type="entry name" value="A03367"/>
</dbReference>
<dbReference type="SMR" id="P02875"/>
<dbReference type="GO" id="GO:0005537">
    <property type="term" value="F:D-mannose binding"/>
    <property type="evidence" value="ECO:0007669"/>
    <property type="project" value="UniProtKB-KW"/>
</dbReference>
<dbReference type="InterPro" id="IPR013320">
    <property type="entry name" value="ConA-like_dom_sf"/>
</dbReference>
<dbReference type="SUPFAM" id="SSF49899">
    <property type="entry name" value="Concanavalin A-like lectins/glucanases"/>
    <property type="match status" value="1"/>
</dbReference>
<sequence>ANIQSFSFKNFNSPSFILQGDATVSSGKLQLP</sequence>
<comment type="function">
    <text>Metalloglycoprotein, containing Ca, Mg, Mn, and Zn and the carbohydrates galactose, glucosamine, mannose, and fucose. It agglutinates erythrocytes of blood group A1.</text>
</comment>
<comment type="subunit">
    <text>Homotetramer.</text>
</comment>
<comment type="similarity">
    <text evidence="1">Belongs to the leguminous lectin family.</text>
</comment>
<organism>
    <name type="scientific">Macrotyloma axillare</name>
    <name type="common">Perennial horse gram</name>
    <name type="synonym">Dolichos axillaris</name>
    <dbReference type="NCBI Taxonomy" id="3876"/>
    <lineage>
        <taxon>Eukaryota</taxon>
        <taxon>Viridiplantae</taxon>
        <taxon>Streptophyta</taxon>
        <taxon>Embryophyta</taxon>
        <taxon>Tracheophyta</taxon>
        <taxon>Spermatophyta</taxon>
        <taxon>Magnoliopsida</taxon>
        <taxon>eudicotyledons</taxon>
        <taxon>Gunneridae</taxon>
        <taxon>Pentapetalae</taxon>
        <taxon>rosids</taxon>
        <taxon>fabids</taxon>
        <taxon>Fabales</taxon>
        <taxon>Fabaceae</taxon>
        <taxon>Papilionoideae</taxon>
        <taxon>50 kb inversion clade</taxon>
        <taxon>NPAAA clade</taxon>
        <taxon>indigoferoid/millettioid clade</taxon>
        <taxon>Phaseoleae</taxon>
        <taxon>Macrotyloma</taxon>
    </lineage>
</organism>
<accession>P02875</accession>
<reference key="1">
    <citation type="journal article" date="1982" name="S. Afr. J. Chem.">
        <title>Isolation and characterization of an anti-A1 lectin from Macrotyloma axillare.</title>
        <authorList>
            <person name="Haylett T."/>
            <person name="Swart L.S."/>
        </authorList>
    </citation>
    <scope>PROTEIN SEQUENCE</scope>
</reference>
<feature type="chain" id="PRO_0000105097" description="Lectin">
    <location>
        <begin position="1"/>
        <end position="32" status="greater than"/>
    </location>
</feature>
<feature type="non-terminal residue">
    <location>
        <position position="32"/>
    </location>
</feature>
<evidence type="ECO:0000305" key="1"/>
<keyword id="KW-0106">Calcium</keyword>
<keyword id="KW-0903">Direct protein sequencing</keyword>
<keyword id="KW-0430">Lectin</keyword>
<keyword id="KW-0465">Mannose-binding</keyword>
<proteinExistence type="evidence at protein level"/>
<protein>
    <recommendedName>
        <fullName>Lectin</fullName>
    </recommendedName>
</protein>